<comment type="function">
    <text evidence="6">Bifunctional enzyme which catalyzes the transfer of glucose from UDP-alpha-D-glucose to glucose-6-phosphate to form trehalose-6-phosphate (Tre6P) and removes the phosphate from Tre6P to produce free trehalose.</text>
</comment>
<comment type="catalytic activity">
    <reaction evidence="6">
        <text>D-glucose 6-phosphate + UDP-alpha-D-glucose = alpha,alpha-trehalose 6-phosphate + UDP + H(+)</text>
        <dbReference type="Rhea" id="RHEA:18889"/>
        <dbReference type="ChEBI" id="CHEBI:15378"/>
        <dbReference type="ChEBI" id="CHEBI:58223"/>
        <dbReference type="ChEBI" id="CHEBI:58429"/>
        <dbReference type="ChEBI" id="CHEBI:58885"/>
        <dbReference type="ChEBI" id="CHEBI:61548"/>
        <dbReference type="EC" id="2.4.1.15"/>
    </reaction>
</comment>
<comment type="catalytic activity">
    <reaction evidence="6">
        <text>alpha,alpha-trehalose 6-phosphate + H2O = alpha,alpha-trehalose + phosphate</text>
        <dbReference type="Rhea" id="RHEA:23420"/>
        <dbReference type="ChEBI" id="CHEBI:15377"/>
        <dbReference type="ChEBI" id="CHEBI:16551"/>
        <dbReference type="ChEBI" id="CHEBI:43474"/>
        <dbReference type="ChEBI" id="CHEBI:58429"/>
        <dbReference type="EC" id="3.1.3.12"/>
    </reaction>
</comment>
<comment type="cofactor">
    <cofactor evidence="3 6">
        <name>Mg(2+)</name>
        <dbReference type="ChEBI" id="CHEBI:18420"/>
    </cofactor>
</comment>
<comment type="biophysicochemical properties">
    <temperatureDependence>
        <text evidence="6">Active at 80 degrees Celsius.</text>
    </temperatureDependence>
</comment>
<comment type="pathway">
    <text evidence="6">Glycan biosynthesis; trehalose biosynthesis.</text>
</comment>
<comment type="subunit">
    <text evidence="6">May interact with the putative glycosyltransferase (GT) TTX_1305. TTX_1305 is required for the trehalose-6-phosphate synthase activity of tpsp.</text>
</comment>
<comment type="miscellaneous">
    <text>Part of an operon with putative glycosyltransferase TTX_1305 and putative membrane protein TTX_1304.1.</text>
</comment>
<comment type="similarity">
    <text evidence="4">In the N-terminal section; belongs to the glycosyltransferase 20 family.</text>
</comment>
<comment type="similarity">
    <text evidence="4">In the C-terminal section; belongs to the trehalose phosphatase family.</text>
</comment>
<comment type="sequence caution" evidence="8">
    <conflict type="erroneous initiation">
        <sequence resource="EMBL-CDS" id="CAF18468"/>
    </conflict>
    <text>Extended N-terminus.</text>
</comment>
<protein>
    <recommendedName>
        <fullName evidence="7">Bifunctional trehalose-6-phosphate synthase/phosphatase</fullName>
    </recommendedName>
    <domain>
        <recommendedName>
            <fullName>Alpha,alpha-trehalose-phosphate synthase [UDP-forming]</fullName>
            <ecNumber evidence="6">2.4.1.15</ecNumber>
        </recommendedName>
        <alternativeName>
            <fullName evidence="7">Trehalose-6-phosphate synthase</fullName>
        </alternativeName>
    </domain>
    <domain>
        <recommendedName>
            <fullName evidence="7">Trehalose-6-phosphate phosphatase</fullName>
            <ecNumber evidence="6">3.1.3.12</ecNumber>
        </recommendedName>
    </domain>
</protein>
<sequence>MRLIVVSNRLPVTISPSGEIRESVGGLATAMKSFLGAVNGGRELGLEEVVWVGWSGVPSERESNDLRERLRGMGLEPVPLSSEEVEGFYEGFSNSTLWPLFHGFSEYATYEEKHWRAYRGVNEKYAKAVVALARPGDLVWIHDYHLMLAPAIVREAAEVGVGFFLHIPFPPAELLQLLPSEWRREILEGLLGSDLVGFHTYEYSANFSRSVVRFLGYKVEMGAIAVGHRRVRVGVFPIGIDFDRFYNSSQDPSVVEEMAKLREMLGRAKVVFSIDRLDYTKGVLRRVAAWERFLREHPEWRGRAVFVLVVVPSRTGVPMYEEMKRQIDREVGRINGELGELNWVPIVYLYRFIPSPTLMALYNIADVALITPLRDGMNLVAKEFVASKRDCRGVLILSELAGASKELAEALVINPNDVGGTAEAIAEALSMSEDEQCRRIRAMQERLRMRDVVRWGTDFIYSLISAKSAREEVEKALRYMEELSVDKLKSDFAKAKRRLLLLDYDGTLVPHYPYPHMAVPDGDLLELLSRLAALPETAVYVVSGRGRDFLDGWLGRLPVGLVAEHGFFLKHPGGEWKSLGKVDPSWRQYAKGIMEDFASNVPGSFVEVKEAGIAWHYRNADETIAEKAVVELIDALSNALAGSGLSILRGKKVVEVRPAGYTKGTAAKMLLDELSPDFVFVAGDDETDEGMFEVAPQSAYTVKVGPGPTLAKFRVGDYRGLRSLLEQLRPP</sequence>
<evidence type="ECO:0000250" key="1"/>
<evidence type="ECO:0000250" key="2">
    <source>
        <dbReference type="UniProtKB" id="P31677"/>
    </source>
</evidence>
<evidence type="ECO:0000250" key="3">
    <source>
        <dbReference type="UniProtKB" id="P31678"/>
    </source>
</evidence>
<evidence type="ECO:0000255" key="4"/>
<evidence type="ECO:0000269" key="5">
    <source>
    </source>
</evidence>
<evidence type="ECO:0000269" key="6">
    <source>
    </source>
</evidence>
<evidence type="ECO:0000303" key="7">
    <source>
    </source>
</evidence>
<evidence type="ECO:0000305" key="8"/>
<evidence type="ECO:0000312" key="9">
    <source>
        <dbReference type="EMBL" id="CAF18468.1"/>
    </source>
</evidence>
<evidence type="ECO:0000312" key="10">
    <source>
        <dbReference type="EMBL" id="CCC81939.1"/>
    </source>
</evidence>
<keyword id="KW-0119">Carbohydrate metabolism</keyword>
<keyword id="KW-0328">Glycosyltransferase</keyword>
<keyword id="KW-0378">Hydrolase</keyword>
<keyword id="KW-0460">Magnesium</keyword>
<keyword id="KW-0479">Metal-binding</keyword>
<keyword id="KW-0511">Multifunctional enzyme</keyword>
<keyword id="KW-1185">Reference proteome</keyword>
<keyword id="KW-0808">Transferase</keyword>
<feature type="chain" id="PRO_0000424542" description="Bifunctional trehalose-6-phosphate synthase/phosphatase">
    <location>
        <begin position="1"/>
        <end position="731"/>
    </location>
</feature>
<feature type="region of interest" description="Alpha,alpha-trehalose-phosphate synthase" evidence="4">
    <location>
        <begin position="1"/>
        <end position="464"/>
    </location>
</feature>
<feature type="region of interest" description="Trehalose-6-phosphate phosphatase" evidence="4">
    <location>
        <begin position="465"/>
        <end position="731"/>
    </location>
</feature>
<feature type="active site" description="Nucleophile" evidence="3">
    <location>
        <position position="503"/>
    </location>
</feature>
<feature type="binding site" evidence="2">
    <location>
        <position position="9"/>
    </location>
    <ligand>
        <name>D-glucose 6-phosphate</name>
        <dbReference type="ChEBI" id="CHEBI:61548"/>
    </ligand>
</feature>
<feature type="binding site" evidence="2">
    <location>
        <begin position="25"/>
        <end position="26"/>
    </location>
    <ligand>
        <name>UDP-alpha-D-glucose</name>
        <dbReference type="ChEBI" id="CHEBI:58885"/>
    </ligand>
</feature>
<feature type="binding site" evidence="2">
    <location>
        <position position="89"/>
    </location>
    <ligand>
        <name>D-glucose 6-phosphate</name>
        <dbReference type="ChEBI" id="CHEBI:61548"/>
    </ligand>
</feature>
<feature type="binding site" evidence="2">
    <location>
        <position position="143"/>
    </location>
    <ligand>
        <name>D-glucose 6-phosphate</name>
        <dbReference type="ChEBI" id="CHEBI:61548"/>
    </ligand>
</feature>
<feature type="binding site" evidence="2">
    <location>
        <position position="276"/>
    </location>
    <ligand>
        <name>UDP-alpha-D-glucose</name>
        <dbReference type="ChEBI" id="CHEBI:58885"/>
    </ligand>
</feature>
<feature type="binding site" evidence="2">
    <location>
        <position position="281"/>
    </location>
    <ligand>
        <name>UDP-alpha-D-glucose</name>
        <dbReference type="ChEBI" id="CHEBI:58885"/>
    </ligand>
</feature>
<feature type="binding site" evidence="2">
    <location>
        <position position="314"/>
    </location>
    <ligand>
        <name>D-glucose 6-phosphate</name>
        <dbReference type="ChEBI" id="CHEBI:61548"/>
    </ligand>
</feature>
<feature type="binding site" evidence="2">
    <location>
        <begin position="379"/>
        <end position="383"/>
    </location>
    <ligand>
        <name>UDP-alpha-D-glucose</name>
        <dbReference type="ChEBI" id="CHEBI:58885"/>
    </ligand>
</feature>
<feature type="binding site" evidence="1">
    <location>
        <begin position="503"/>
        <end position="505"/>
    </location>
    <ligand>
        <name>alpha,alpha-trehalose 6-phosphate</name>
        <dbReference type="ChEBI" id="CHEBI:58429"/>
    </ligand>
</feature>
<feature type="binding site" evidence="3">
    <location>
        <position position="503"/>
    </location>
    <ligand>
        <name>Mg(2+)</name>
        <dbReference type="ChEBI" id="CHEBI:18420"/>
    </ligand>
</feature>
<feature type="binding site" evidence="1">
    <location>
        <position position="505"/>
    </location>
    <ligand>
        <name>Mg(2+)</name>
        <dbReference type="ChEBI" id="CHEBI:18420"/>
    </ligand>
</feature>
<feature type="binding site" evidence="3">
    <location>
        <position position="684"/>
    </location>
    <ligand>
        <name>Mg(2+)</name>
        <dbReference type="ChEBI" id="CHEBI:18420"/>
    </ligand>
</feature>
<organism>
    <name type="scientific">Thermoproteus tenax (strain ATCC 35583 / DSM 2078 / JCM 9277 / NBRC 100435 / Kra 1)</name>
    <dbReference type="NCBI Taxonomy" id="768679"/>
    <lineage>
        <taxon>Archaea</taxon>
        <taxon>Thermoproteota</taxon>
        <taxon>Thermoprotei</taxon>
        <taxon>Thermoproteales</taxon>
        <taxon>Thermoproteaceae</taxon>
        <taxon>Thermoproteus</taxon>
    </lineage>
</organism>
<dbReference type="EC" id="2.4.1.15" evidence="6"/>
<dbReference type="EC" id="3.1.3.12" evidence="6"/>
<dbReference type="EMBL" id="AJ621287">
    <property type="protein sequence ID" value="CAF18468.1"/>
    <property type="status" value="ALT_INIT"/>
    <property type="molecule type" value="Genomic_DNA"/>
</dbReference>
<dbReference type="EMBL" id="FN869859">
    <property type="protein sequence ID" value="CCC81939.1"/>
    <property type="molecule type" value="Genomic_DNA"/>
</dbReference>
<dbReference type="RefSeq" id="WP_014127194.1">
    <property type="nucleotide sequence ID" value="NC_016070.1"/>
</dbReference>
<dbReference type="SMR" id="G4RK44"/>
<dbReference type="STRING" id="768679.TTX_1304"/>
<dbReference type="CAZy" id="GT20">
    <property type="family name" value="Glycosyltransferase Family 20"/>
</dbReference>
<dbReference type="PaxDb" id="768679-TTX_1304"/>
<dbReference type="GeneID" id="11262184"/>
<dbReference type="KEGG" id="ttn:TTX_1304"/>
<dbReference type="PATRIC" id="fig|768679.9.peg.1319"/>
<dbReference type="eggNOG" id="arCOG02831">
    <property type="taxonomic scope" value="Archaea"/>
</dbReference>
<dbReference type="HOGENOM" id="CLU_002351_3_3_2"/>
<dbReference type="OrthoDB" id="79955at2157"/>
<dbReference type="BRENDA" id="2.4.1.15">
    <property type="organism ID" value="6329"/>
</dbReference>
<dbReference type="BRENDA" id="3.1.3.12">
    <property type="organism ID" value="6329"/>
</dbReference>
<dbReference type="UniPathway" id="UPA00299"/>
<dbReference type="Proteomes" id="UP000002654">
    <property type="component" value="Chromosome"/>
</dbReference>
<dbReference type="GO" id="GO:0005829">
    <property type="term" value="C:cytosol"/>
    <property type="evidence" value="ECO:0007669"/>
    <property type="project" value="TreeGrafter"/>
</dbReference>
<dbReference type="GO" id="GO:0003825">
    <property type="term" value="F:alpha,alpha-trehalose-phosphate synthase (UDP-forming) activity"/>
    <property type="evidence" value="ECO:0007669"/>
    <property type="project" value="UniProtKB-EC"/>
</dbReference>
<dbReference type="GO" id="GO:0046872">
    <property type="term" value="F:metal ion binding"/>
    <property type="evidence" value="ECO:0007669"/>
    <property type="project" value="UniProtKB-KW"/>
</dbReference>
<dbReference type="GO" id="GO:0004805">
    <property type="term" value="F:trehalose-phosphatase activity"/>
    <property type="evidence" value="ECO:0007669"/>
    <property type="project" value="UniProtKB-EC"/>
</dbReference>
<dbReference type="GO" id="GO:0005992">
    <property type="term" value="P:trehalose biosynthetic process"/>
    <property type="evidence" value="ECO:0007669"/>
    <property type="project" value="UniProtKB-UniPathway"/>
</dbReference>
<dbReference type="CDD" id="cd03788">
    <property type="entry name" value="GT20_TPS"/>
    <property type="match status" value="1"/>
</dbReference>
<dbReference type="CDD" id="cd01627">
    <property type="entry name" value="HAD_TPP"/>
    <property type="match status" value="1"/>
</dbReference>
<dbReference type="Gene3D" id="3.40.50.2000">
    <property type="entry name" value="Glycogen Phosphorylase B"/>
    <property type="match status" value="2"/>
</dbReference>
<dbReference type="Gene3D" id="3.40.50.1000">
    <property type="entry name" value="HAD superfamily/HAD-like"/>
    <property type="match status" value="1"/>
</dbReference>
<dbReference type="Gene3D" id="3.30.70.1020">
    <property type="entry name" value="Trehalose-6-phosphate phosphatase related protein, domain 2"/>
    <property type="match status" value="1"/>
</dbReference>
<dbReference type="InterPro" id="IPR001830">
    <property type="entry name" value="Glyco_trans_20"/>
</dbReference>
<dbReference type="InterPro" id="IPR036412">
    <property type="entry name" value="HAD-like_sf"/>
</dbReference>
<dbReference type="InterPro" id="IPR006379">
    <property type="entry name" value="HAD-SF_hydro_IIB"/>
</dbReference>
<dbReference type="InterPro" id="IPR023214">
    <property type="entry name" value="HAD_sf"/>
</dbReference>
<dbReference type="InterPro" id="IPR012766">
    <property type="entry name" value="Trehalose_OtsA"/>
</dbReference>
<dbReference type="InterPro" id="IPR003337">
    <property type="entry name" value="Trehalose_PPase"/>
</dbReference>
<dbReference type="NCBIfam" id="TIGR01484">
    <property type="entry name" value="HAD-SF-IIB"/>
    <property type="match status" value="1"/>
</dbReference>
<dbReference type="NCBIfam" id="NF011071">
    <property type="entry name" value="PRK14501.1"/>
    <property type="match status" value="1"/>
</dbReference>
<dbReference type="NCBIfam" id="TIGR00685">
    <property type="entry name" value="T6PP"/>
    <property type="match status" value="1"/>
</dbReference>
<dbReference type="NCBIfam" id="TIGR02400">
    <property type="entry name" value="trehalose_OtsA"/>
    <property type="match status" value="1"/>
</dbReference>
<dbReference type="PANTHER" id="PTHR10788:SF106">
    <property type="entry name" value="BCDNA.GH08860"/>
    <property type="match status" value="1"/>
</dbReference>
<dbReference type="PANTHER" id="PTHR10788">
    <property type="entry name" value="TREHALOSE-6-PHOSPHATE SYNTHASE"/>
    <property type="match status" value="1"/>
</dbReference>
<dbReference type="Pfam" id="PF00982">
    <property type="entry name" value="Glyco_transf_20"/>
    <property type="match status" value="1"/>
</dbReference>
<dbReference type="Pfam" id="PF02358">
    <property type="entry name" value="Trehalose_PPase"/>
    <property type="match status" value="1"/>
</dbReference>
<dbReference type="SUPFAM" id="SSF56784">
    <property type="entry name" value="HAD-like"/>
    <property type="match status" value="1"/>
</dbReference>
<dbReference type="SUPFAM" id="SSF53756">
    <property type="entry name" value="UDP-Glycosyltransferase/glycogen phosphorylase"/>
    <property type="match status" value="1"/>
</dbReference>
<reference evidence="9" key="1">
    <citation type="journal article" date="2004" name="J. Bacteriol.">
        <title>Reconstruction of the central carbohydrate metabolism of Thermoproteus tenax using genomic and biochemical data.</title>
        <authorList>
            <person name="Siebers B."/>
            <person name="Tjaden B."/>
            <person name="Michalke K."/>
            <person name="Doerr C."/>
            <person name="Ahmed H."/>
            <person name="Zaparty M."/>
            <person name="Gordon P."/>
            <person name="Sensen C.W."/>
            <person name="Zibat A."/>
            <person name="Klenk H.-P."/>
            <person name="Schuster S.C."/>
            <person name="Hensel R."/>
        </authorList>
    </citation>
    <scope>NUCLEOTIDE SEQUENCE [GENOMIC DNA]</scope>
    <scope>IDENTIFICATION</scope>
    <source>
        <strain evidence="5">ATCC 35583 / DSM 2078 / JCM 9277 / NBRC 100435 / Kra 1</strain>
    </source>
</reference>
<reference evidence="10" key="2">
    <citation type="journal article" date="2011" name="PLoS ONE">
        <title>The complete genome sequence of Thermoproteus tenax: a physiologically versatile member of the Crenarchaeota.</title>
        <authorList>
            <person name="Siebers B."/>
            <person name="Zaparty M."/>
            <person name="Raddatz G."/>
            <person name="Tjaden B."/>
            <person name="Albers S.V."/>
            <person name="Bell S.D."/>
            <person name="Blombach F."/>
            <person name="Kletzin A."/>
            <person name="Kyrpides N."/>
            <person name="Lanz C."/>
            <person name="Plagens A."/>
            <person name="Rampp M."/>
            <person name="Rosinus A."/>
            <person name="von Jan M."/>
            <person name="Makarova K.S."/>
            <person name="Klenk H.P."/>
            <person name="Schuster S.C."/>
            <person name="Hensel R."/>
        </authorList>
    </citation>
    <scope>NUCLEOTIDE SEQUENCE [LARGE SCALE GENOMIC DNA]</scope>
    <source>
        <strain>ATCC 35583 / DSM 2078 / JCM 9277 / NBRC 100435 / Kra 1</strain>
    </source>
</reference>
<reference evidence="8" key="3">
    <citation type="journal article" date="2013" name="PLoS ONE">
        <title>The first prokaryotic trehalose synthase complex identified in the hyperthermophilic crenarchaeon Thermoproteus tenax.</title>
        <authorList>
            <person name="Zaparty M."/>
            <person name="Hagemann A."/>
            <person name="Brasen C."/>
            <person name="Hensel R."/>
            <person name="Lupas A.N."/>
            <person name="Brinkmann H."/>
            <person name="Siebers B."/>
        </authorList>
    </citation>
    <scope>FUNCTION</scope>
    <scope>CATALYTIC ACTIVITY</scope>
    <scope>COFACTOR</scope>
    <scope>SUBUNIT</scope>
    <scope>BIOPHYSICOCHEMICAL PROPERTIES</scope>
    <scope>PATHWAY</scope>
    <source>
        <strain evidence="6">ATCC 35583 / DSM 2078 / JCM 9277 / NBRC 100435 / Kra 1</strain>
    </source>
</reference>
<gene>
    <name evidence="10" type="primary">tpsp</name>
    <name type="ordered locus">TTX_1304</name>
</gene>
<proteinExistence type="evidence at protein level"/>
<accession>G4RK44</accession>
<accession>Q704C6</accession>
<name>TPSP_THETK</name>